<name>TIG_XANP2</name>
<evidence type="ECO:0000255" key="1">
    <source>
        <dbReference type="HAMAP-Rule" id="MF_00303"/>
    </source>
</evidence>
<comment type="function">
    <text evidence="1">Involved in protein export. Acts as a chaperone by maintaining the newly synthesized protein in an open conformation. Functions as a peptidyl-prolyl cis-trans isomerase.</text>
</comment>
<comment type="catalytic activity">
    <reaction evidence="1">
        <text>[protein]-peptidylproline (omega=180) = [protein]-peptidylproline (omega=0)</text>
        <dbReference type="Rhea" id="RHEA:16237"/>
        <dbReference type="Rhea" id="RHEA-COMP:10747"/>
        <dbReference type="Rhea" id="RHEA-COMP:10748"/>
        <dbReference type="ChEBI" id="CHEBI:83833"/>
        <dbReference type="ChEBI" id="CHEBI:83834"/>
        <dbReference type="EC" id="5.2.1.8"/>
    </reaction>
</comment>
<comment type="subcellular location">
    <subcellularLocation>
        <location>Cytoplasm</location>
    </subcellularLocation>
    <text evidence="1">About half TF is bound to the ribosome near the polypeptide exit tunnel while the other half is free in the cytoplasm.</text>
</comment>
<comment type="domain">
    <text evidence="1">Consists of 3 domains; the N-terminus binds the ribosome, the middle domain has PPIase activity, while the C-terminus has intrinsic chaperone activity on its own.</text>
</comment>
<comment type="similarity">
    <text evidence="1">Belongs to the FKBP-type PPIase family. Tig subfamily.</text>
</comment>
<gene>
    <name evidence="1" type="primary">tig</name>
    <name type="ordered locus">Xaut_3590</name>
</gene>
<dbReference type="EC" id="5.2.1.8" evidence="1"/>
<dbReference type="EMBL" id="CP000781">
    <property type="protein sequence ID" value="ABS68818.1"/>
    <property type="molecule type" value="Genomic_DNA"/>
</dbReference>
<dbReference type="SMR" id="A7ILC5"/>
<dbReference type="STRING" id="78245.Xaut_3590"/>
<dbReference type="KEGG" id="xau:Xaut_3590"/>
<dbReference type="eggNOG" id="COG0544">
    <property type="taxonomic scope" value="Bacteria"/>
</dbReference>
<dbReference type="HOGENOM" id="CLU_033058_2_2_5"/>
<dbReference type="OrthoDB" id="9767721at2"/>
<dbReference type="PhylomeDB" id="A7ILC5"/>
<dbReference type="Proteomes" id="UP000002417">
    <property type="component" value="Chromosome"/>
</dbReference>
<dbReference type="GO" id="GO:0005737">
    <property type="term" value="C:cytoplasm"/>
    <property type="evidence" value="ECO:0007669"/>
    <property type="project" value="UniProtKB-SubCell"/>
</dbReference>
<dbReference type="GO" id="GO:0003755">
    <property type="term" value="F:peptidyl-prolyl cis-trans isomerase activity"/>
    <property type="evidence" value="ECO:0007669"/>
    <property type="project" value="UniProtKB-UniRule"/>
</dbReference>
<dbReference type="GO" id="GO:0044183">
    <property type="term" value="F:protein folding chaperone"/>
    <property type="evidence" value="ECO:0007669"/>
    <property type="project" value="TreeGrafter"/>
</dbReference>
<dbReference type="GO" id="GO:0043022">
    <property type="term" value="F:ribosome binding"/>
    <property type="evidence" value="ECO:0007669"/>
    <property type="project" value="TreeGrafter"/>
</dbReference>
<dbReference type="GO" id="GO:0051083">
    <property type="term" value="P:'de novo' cotranslational protein folding"/>
    <property type="evidence" value="ECO:0007669"/>
    <property type="project" value="TreeGrafter"/>
</dbReference>
<dbReference type="GO" id="GO:0051301">
    <property type="term" value="P:cell division"/>
    <property type="evidence" value="ECO:0007669"/>
    <property type="project" value="UniProtKB-KW"/>
</dbReference>
<dbReference type="GO" id="GO:0061077">
    <property type="term" value="P:chaperone-mediated protein folding"/>
    <property type="evidence" value="ECO:0007669"/>
    <property type="project" value="TreeGrafter"/>
</dbReference>
<dbReference type="GO" id="GO:0015031">
    <property type="term" value="P:protein transport"/>
    <property type="evidence" value="ECO:0007669"/>
    <property type="project" value="UniProtKB-UniRule"/>
</dbReference>
<dbReference type="GO" id="GO:0043335">
    <property type="term" value="P:protein unfolding"/>
    <property type="evidence" value="ECO:0007669"/>
    <property type="project" value="TreeGrafter"/>
</dbReference>
<dbReference type="FunFam" id="3.10.50.40:FF:000001">
    <property type="entry name" value="Trigger factor"/>
    <property type="match status" value="1"/>
</dbReference>
<dbReference type="Gene3D" id="3.10.50.40">
    <property type="match status" value="1"/>
</dbReference>
<dbReference type="Gene3D" id="3.30.70.1050">
    <property type="entry name" value="Trigger factor ribosome-binding domain"/>
    <property type="match status" value="1"/>
</dbReference>
<dbReference type="Gene3D" id="1.10.3120.10">
    <property type="entry name" value="Trigger factor, C-terminal domain"/>
    <property type="match status" value="1"/>
</dbReference>
<dbReference type="HAMAP" id="MF_00303">
    <property type="entry name" value="Trigger_factor_Tig"/>
    <property type="match status" value="1"/>
</dbReference>
<dbReference type="InterPro" id="IPR046357">
    <property type="entry name" value="PPIase_dom_sf"/>
</dbReference>
<dbReference type="InterPro" id="IPR001179">
    <property type="entry name" value="PPIase_FKBP_dom"/>
</dbReference>
<dbReference type="InterPro" id="IPR005215">
    <property type="entry name" value="Trig_fac"/>
</dbReference>
<dbReference type="InterPro" id="IPR008880">
    <property type="entry name" value="Trigger_fac_C"/>
</dbReference>
<dbReference type="InterPro" id="IPR037041">
    <property type="entry name" value="Trigger_fac_C_sf"/>
</dbReference>
<dbReference type="InterPro" id="IPR008881">
    <property type="entry name" value="Trigger_fac_ribosome-bd_bac"/>
</dbReference>
<dbReference type="InterPro" id="IPR036611">
    <property type="entry name" value="Trigger_fac_ribosome-bd_sf"/>
</dbReference>
<dbReference type="InterPro" id="IPR027304">
    <property type="entry name" value="Trigger_fact/SurA_dom_sf"/>
</dbReference>
<dbReference type="NCBIfam" id="TIGR00115">
    <property type="entry name" value="tig"/>
    <property type="match status" value="1"/>
</dbReference>
<dbReference type="PANTHER" id="PTHR30560">
    <property type="entry name" value="TRIGGER FACTOR CHAPERONE AND PEPTIDYL-PROLYL CIS/TRANS ISOMERASE"/>
    <property type="match status" value="1"/>
</dbReference>
<dbReference type="PANTHER" id="PTHR30560:SF3">
    <property type="entry name" value="TRIGGER FACTOR-LIKE PROTEIN TIG, CHLOROPLASTIC"/>
    <property type="match status" value="1"/>
</dbReference>
<dbReference type="Pfam" id="PF00254">
    <property type="entry name" value="FKBP_C"/>
    <property type="match status" value="1"/>
</dbReference>
<dbReference type="Pfam" id="PF05698">
    <property type="entry name" value="Trigger_C"/>
    <property type="match status" value="1"/>
</dbReference>
<dbReference type="Pfam" id="PF05697">
    <property type="entry name" value="Trigger_N"/>
    <property type="match status" value="1"/>
</dbReference>
<dbReference type="PIRSF" id="PIRSF003095">
    <property type="entry name" value="Trigger_factor"/>
    <property type="match status" value="1"/>
</dbReference>
<dbReference type="SUPFAM" id="SSF54534">
    <property type="entry name" value="FKBP-like"/>
    <property type="match status" value="1"/>
</dbReference>
<dbReference type="SUPFAM" id="SSF109998">
    <property type="entry name" value="Triger factor/SurA peptide-binding domain-like"/>
    <property type="match status" value="1"/>
</dbReference>
<dbReference type="SUPFAM" id="SSF102735">
    <property type="entry name" value="Trigger factor ribosome-binding domain"/>
    <property type="match status" value="1"/>
</dbReference>
<dbReference type="PROSITE" id="PS50059">
    <property type="entry name" value="FKBP_PPIASE"/>
    <property type="match status" value="1"/>
</dbReference>
<sequence length="452" mass="50038">MQVTETQADGLKRAFRVVVSAADLGAKADAKLAELKGQVKLNGFRPGKVPVAHLKRVYGKSVMSEVIEQTVNETNGKIVEEHGFKLALQPKVKLPEEDPQAQGLLEGGKDLAYDLEIEILPKIELGNFKDISVEKLVVEVSDAEVDETIQRIADANRPFVTREGGYAENGDRVTIDFTGYVDGEKFPGGEGQDIDVLLGSNGFIPGFEEQLLGVYAGDNRTLNVTFPEAYAAKELAGKAATFEVTVKSVAAPGPLTLDDEFAKTLGQESLEKLKEMVRARIASEHAGAARQKVKRALLDALDTTHQFAVPEGLVEQEFFGVWSRVQEDLAAQNRSFADEGTTEEEARADYRKIAERRVRLGLVLAEIGERNNIQVSEDEVTRAVVERARQFPGQEQQVWEYYRRTPEALASVRAPLFEEKVVDFLLELANVTEKTVTREELYKEEEDDEKAA</sequence>
<reference key="1">
    <citation type="submission" date="2007-07" db="EMBL/GenBank/DDBJ databases">
        <title>Complete sequence of chromosome of Xanthobacter autotrophicus Py2.</title>
        <authorList>
            <consortium name="US DOE Joint Genome Institute"/>
            <person name="Copeland A."/>
            <person name="Lucas S."/>
            <person name="Lapidus A."/>
            <person name="Barry K."/>
            <person name="Glavina del Rio T."/>
            <person name="Hammon N."/>
            <person name="Israni S."/>
            <person name="Dalin E."/>
            <person name="Tice H."/>
            <person name="Pitluck S."/>
            <person name="Sims D."/>
            <person name="Brettin T."/>
            <person name="Bruce D."/>
            <person name="Detter J.C."/>
            <person name="Han C."/>
            <person name="Tapia R."/>
            <person name="Brainard J."/>
            <person name="Schmutz J."/>
            <person name="Larimer F."/>
            <person name="Land M."/>
            <person name="Hauser L."/>
            <person name="Kyrpides N."/>
            <person name="Kim E."/>
            <person name="Ensigns S.A."/>
            <person name="Richardson P."/>
        </authorList>
    </citation>
    <scope>NUCLEOTIDE SEQUENCE [LARGE SCALE GENOMIC DNA]</scope>
    <source>
        <strain>ATCC BAA-1158 / Py2</strain>
    </source>
</reference>
<protein>
    <recommendedName>
        <fullName evidence="1">Trigger factor</fullName>
        <shortName evidence="1">TF</shortName>
        <ecNumber evidence="1">5.2.1.8</ecNumber>
    </recommendedName>
    <alternativeName>
        <fullName evidence="1">PPIase</fullName>
    </alternativeName>
</protein>
<feature type="chain" id="PRO_1000115602" description="Trigger factor">
    <location>
        <begin position="1"/>
        <end position="452"/>
    </location>
</feature>
<feature type="domain" description="PPIase FKBP-type" evidence="1">
    <location>
        <begin position="170"/>
        <end position="255"/>
    </location>
</feature>
<organism>
    <name type="scientific">Xanthobacter autotrophicus (strain ATCC BAA-1158 / Py2)</name>
    <dbReference type="NCBI Taxonomy" id="78245"/>
    <lineage>
        <taxon>Bacteria</taxon>
        <taxon>Pseudomonadati</taxon>
        <taxon>Pseudomonadota</taxon>
        <taxon>Alphaproteobacteria</taxon>
        <taxon>Hyphomicrobiales</taxon>
        <taxon>Xanthobacteraceae</taxon>
        <taxon>Xanthobacter</taxon>
    </lineage>
</organism>
<proteinExistence type="inferred from homology"/>
<accession>A7ILC5</accession>
<keyword id="KW-0131">Cell cycle</keyword>
<keyword id="KW-0132">Cell division</keyword>
<keyword id="KW-0143">Chaperone</keyword>
<keyword id="KW-0963">Cytoplasm</keyword>
<keyword id="KW-0413">Isomerase</keyword>
<keyword id="KW-1185">Reference proteome</keyword>
<keyword id="KW-0697">Rotamase</keyword>